<evidence type="ECO:0000250" key="1"/>
<evidence type="ECO:0000305" key="2"/>
<organism>
    <name type="scientific">Bacillus subtilis (strain 168)</name>
    <dbReference type="NCBI Taxonomy" id="224308"/>
    <lineage>
        <taxon>Bacteria</taxon>
        <taxon>Bacillati</taxon>
        <taxon>Bacillota</taxon>
        <taxon>Bacilli</taxon>
        <taxon>Bacillales</taxon>
        <taxon>Bacillaceae</taxon>
        <taxon>Bacillus</taxon>
    </lineage>
</organism>
<protein>
    <recommendedName>
        <fullName>Spore coat polysaccharide biosynthesis protein SpsC</fullName>
    </recommendedName>
</protein>
<feature type="chain" id="PRO_0000110014" description="Spore coat polysaccharide biosynthesis protein SpsC">
    <location>
        <begin position="1"/>
        <end position="389"/>
    </location>
</feature>
<feature type="modified residue" description="N6-(pyridoxal phosphate)lysine" evidence="1">
    <location>
        <position position="187"/>
    </location>
</feature>
<gene>
    <name type="primary">spsC</name>
    <name type="ordered locus">BSU37890</name>
    <name type="ORF">ipa-65d</name>
</gene>
<proteinExistence type="inferred from homology"/>
<sequence>MVQKRNHFLPYSLPLIGKEEIQEVTETLESGWLSKGPKVQQFEKEFAAFVGAKHAVAVNSCTAALFLALKAKGIGPGDEVITSPLTFSSTANTIIHTGATPVFADIDENTLNIDPVKLEAAVTPRTKAVVPVHFGGQSCDMDAILAVAQNHGLFVLEDAAHAVYTTYKQRMIGSIGDATAFSFYATKNLATGEGGMLTTDDEELADKIRVLSLHGMSKAAWNRYSSNGSWYYEVESPGYKMNMFDLQAALGLHQLKRLDDMQKRREEIAGRYQTAFQQIPGLITPFVHDDGRHAWHLYVLQVDEKKAGVTRSEMITALKDEYNIGTSVHFIPVHIHPYYQKQFGYKEADFPNAMNYYKRTLSLPLYPSMSDDDVDDVIEAVRDIVKGAD</sequence>
<name>SPSC_BACSU</name>
<dbReference type="EMBL" id="X73124">
    <property type="protein sequence ID" value="CAA51621.1"/>
    <property type="molecule type" value="Genomic_DNA"/>
</dbReference>
<dbReference type="EMBL" id="AL009126">
    <property type="protein sequence ID" value="CAB15815.1"/>
    <property type="molecule type" value="Genomic_DNA"/>
</dbReference>
<dbReference type="PIR" id="S39720">
    <property type="entry name" value="S39720"/>
</dbReference>
<dbReference type="RefSeq" id="NP_391668.1">
    <property type="nucleotide sequence ID" value="NC_000964.3"/>
</dbReference>
<dbReference type="RefSeq" id="WP_003243878.1">
    <property type="nucleotide sequence ID" value="NZ_OZ025638.1"/>
</dbReference>
<dbReference type="SMR" id="P39623"/>
<dbReference type="FunCoup" id="P39623">
    <property type="interactions" value="409"/>
</dbReference>
<dbReference type="STRING" id="224308.BSU37890"/>
<dbReference type="PaxDb" id="224308-BSU37890"/>
<dbReference type="EnsemblBacteria" id="CAB15815">
    <property type="protein sequence ID" value="CAB15815"/>
    <property type="gene ID" value="BSU_37890"/>
</dbReference>
<dbReference type="GeneID" id="937234"/>
<dbReference type="KEGG" id="bsu:BSU37890"/>
<dbReference type="PATRIC" id="fig|224308.179.peg.4102"/>
<dbReference type="eggNOG" id="COG0399">
    <property type="taxonomic scope" value="Bacteria"/>
</dbReference>
<dbReference type="InParanoid" id="P39623"/>
<dbReference type="OrthoDB" id="9810913at2"/>
<dbReference type="PhylomeDB" id="P39623"/>
<dbReference type="BioCyc" id="BSUB:BSU37890-MONOMER"/>
<dbReference type="UniPathway" id="UPA00953"/>
<dbReference type="Proteomes" id="UP000001570">
    <property type="component" value="Chromosome"/>
</dbReference>
<dbReference type="GO" id="GO:0030170">
    <property type="term" value="F:pyridoxal phosphate binding"/>
    <property type="evidence" value="ECO:0000318"/>
    <property type="project" value="GO_Central"/>
</dbReference>
<dbReference type="GO" id="GO:0008483">
    <property type="term" value="F:transaminase activity"/>
    <property type="evidence" value="ECO:0000318"/>
    <property type="project" value="GO_Central"/>
</dbReference>
<dbReference type="GO" id="GO:0000271">
    <property type="term" value="P:polysaccharide biosynthetic process"/>
    <property type="evidence" value="ECO:0000318"/>
    <property type="project" value="GO_Central"/>
</dbReference>
<dbReference type="CDD" id="cd00616">
    <property type="entry name" value="AHBA_syn"/>
    <property type="match status" value="1"/>
</dbReference>
<dbReference type="FunFam" id="3.40.640.10:FF:000040">
    <property type="entry name" value="UDP-4-amino-4-deoxy-L-arabinose--oxoglutarate aminotransferase"/>
    <property type="match status" value="1"/>
</dbReference>
<dbReference type="FunFam" id="3.90.1150.10:FF:000030">
    <property type="entry name" value="UDP-4-amino-4-deoxy-L-arabinose--oxoglutarate aminotransferase"/>
    <property type="match status" value="1"/>
</dbReference>
<dbReference type="Gene3D" id="3.90.1150.10">
    <property type="entry name" value="Aspartate Aminotransferase, domain 1"/>
    <property type="match status" value="1"/>
</dbReference>
<dbReference type="Gene3D" id="3.40.640.10">
    <property type="entry name" value="Type I PLP-dependent aspartate aminotransferase-like (Major domain)"/>
    <property type="match status" value="1"/>
</dbReference>
<dbReference type="InterPro" id="IPR000653">
    <property type="entry name" value="DegT/StrS_aminotransferase"/>
</dbReference>
<dbReference type="InterPro" id="IPR015424">
    <property type="entry name" value="PyrdxlP-dep_Trfase"/>
</dbReference>
<dbReference type="InterPro" id="IPR015421">
    <property type="entry name" value="PyrdxlP-dep_Trfase_major"/>
</dbReference>
<dbReference type="InterPro" id="IPR015422">
    <property type="entry name" value="PyrdxlP-dep_Trfase_small"/>
</dbReference>
<dbReference type="PANTHER" id="PTHR30244:SF34">
    <property type="entry name" value="DTDP-4-AMINO-4,6-DIDEOXYGALACTOSE TRANSAMINASE"/>
    <property type="match status" value="1"/>
</dbReference>
<dbReference type="PANTHER" id="PTHR30244">
    <property type="entry name" value="TRANSAMINASE"/>
    <property type="match status" value="1"/>
</dbReference>
<dbReference type="Pfam" id="PF01041">
    <property type="entry name" value="DegT_DnrJ_EryC1"/>
    <property type="match status" value="1"/>
</dbReference>
<dbReference type="PIRSF" id="PIRSF000390">
    <property type="entry name" value="PLP_StrS"/>
    <property type="match status" value="1"/>
</dbReference>
<dbReference type="SUPFAM" id="SSF53383">
    <property type="entry name" value="PLP-dependent transferases"/>
    <property type="match status" value="1"/>
</dbReference>
<accession>P39623</accession>
<reference key="1">
    <citation type="journal article" date="1993" name="Mol. Microbiol.">
        <title>Bacillus subtilis genome project: cloning and sequencing of the 97 kb region from 325 degrees to 333 degrees.</title>
        <authorList>
            <person name="Glaser P."/>
            <person name="Kunst F."/>
            <person name="Arnaud M."/>
            <person name="Coudart M.P."/>
            <person name="Gonzales W."/>
            <person name="Hullo M.-F."/>
            <person name="Ionescu M."/>
            <person name="Lubochinsky B."/>
            <person name="Marcelino L."/>
            <person name="Moszer I."/>
            <person name="Presecan E."/>
            <person name="Santana M."/>
            <person name="Schneider E."/>
            <person name="Schweizer J."/>
            <person name="Vertes A."/>
            <person name="Rapoport G."/>
            <person name="Danchin A."/>
        </authorList>
    </citation>
    <scope>NUCLEOTIDE SEQUENCE [GENOMIC DNA]</scope>
    <source>
        <strain>168</strain>
    </source>
</reference>
<reference key="2">
    <citation type="journal article" date="1997" name="Nature">
        <title>The complete genome sequence of the Gram-positive bacterium Bacillus subtilis.</title>
        <authorList>
            <person name="Kunst F."/>
            <person name="Ogasawara N."/>
            <person name="Moszer I."/>
            <person name="Albertini A.M."/>
            <person name="Alloni G."/>
            <person name="Azevedo V."/>
            <person name="Bertero M.G."/>
            <person name="Bessieres P."/>
            <person name="Bolotin A."/>
            <person name="Borchert S."/>
            <person name="Borriss R."/>
            <person name="Boursier L."/>
            <person name="Brans A."/>
            <person name="Braun M."/>
            <person name="Brignell S.C."/>
            <person name="Bron S."/>
            <person name="Brouillet S."/>
            <person name="Bruschi C.V."/>
            <person name="Caldwell B."/>
            <person name="Capuano V."/>
            <person name="Carter N.M."/>
            <person name="Choi S.-K."/>
            <person name="Codani J.-J."/>
            <person name="Connerton I.F."/>
            <person name="Cummings N.J."/>
            <person name="Daniel R.A."/>
            <person name="Denizot F."/>
            <person name="Devine K.M."/>
            <person name="Duesterhoeft A."/>
            <person name="Ehrlich S.D."/>
            <person name="Emmerson P.T."/>
            <person name="Entian K.-D."/>
            <person name="Errington J."/>
            <person name="Fabret C."/>
            <person name="Ferrari E."/>
            <person name="Foulger D."/>
            <person name="Fritz C."/>
            <person name="Fujita M."/>
            <person name="Fujita Y."/>
            <person name="Fuma S."/>
            <person name="Galizzi A."/>
            <person name="Galleron N."/>
            <person name="Ghim S.-Y."/>
            <person name="Glaser P."/>
            <person name="Goffeau A."/>
            <person name="Golightly E.J."/>
            <person name="Grandi G."/>
            <person name="Guiseppi G."/>
            <person name="Guy B.J."/>
            <person name="Haga K."/>
            <person name="Haiech J."/>
            <person name="Harwood C.R."/>
            <person name="Henaut A."/>
            <person name="Hilbert H."/>
            <person name="Holsappel S."/>
            <person name="Hosono S."/>
            <person name="Hullo M.-F."/>
            <person name="Itaya M."/>
            <person name="Jones L.-M."/>
            <person name="Joris B."/>
            <person name="Karamata D."/>
            <person name="Kasahara Y."/>
            <person name="Klaerr-Blanchard M."/>
            <person name="Klein C."/>
            <person name="Kobayashi Y."/>
            <person name="Koetter P."/>
            <person name="Koningstein G."/>
            <person name="Krogh S."/>
            <person name="Kumano M."/>
            <person name="Kurita K."/>
            <person name="Lapidus A."/>
            <person name="Lardinois S."/>
            <person name="Lauber J."/>
            <person name="Lazarevic V."/>
            <person name="Lee S.-M."/>
            <person name="Levine A."/>
            <person name="Liu H."/>
            <person name="Masuda S."/>
            <person name="Mauel C."/>
            <person name="Medigue C."/>
            <person name="Medina N."/>
            <person name="Mellado R.P."/>
            <person name="Mizuno M."/>
            <person name="Moestl D."/>
            <person name="Nakai S."/>
            <person name="Noback M."/>
            <person name="Noone D."/>
            <person name="O'Reilly M."/>
            <person name="Ogawa K."/>
            <person name="Ogiwara A."/>
            <person name="Oudega B."/>
            <person name="Park S.-H."/>
            <person name="Parro V."/>
            <person name="Pohl T.M."/>
            <person name="Portetelle D."/>
            <person name="Porwollik S."/>
            <person name="Prescott A.M."/>
            <person name="Presecan E."/>
            <person name="Pujic P."/>
            <person name="Purnelle B."/>
            <person name="Rapoport G."/>
            <person name="Rey M."/>
            <person name="Reynolds S."/>
            <person name="Rieger M."/>
            <person name="Rivolta C."/>
            <person name="Rocha E."/>
            <person name="Roche B."/>
            <person name="Rose M."/>
            <person name="Sadaie Y."/>
            <person name="Sato T."/>
            <person name="Scanlan E."/>
            <person name="Schleich S."/>
            <person name="Schroeter R."/>
            <person name="Scoffone F."/>
            <person name="Sekiguchi J."/>
            <person name="Sekowska A."/>
            <person name="Seror S.J."/>
            <person name="Serror P."/>
            <person name="Shin B.-S."/>
            <person name="Soldo B."/>
            <person name="Sorokin A."/>
            <person name="Tacconi E."/>
            <person name="Takagi T."/>
            <person name="Takahashi H."/>
            <person name="Takemaru K."/>
            <person name="Takeuchi M."/>
            <person name="Tamakoshi A."/>
            <person name="Tanaka T."/>
            <person name="Terpstra P."/>
            <person name="Tognoni A."/>
            <person name="Tosato V."/>
            <person name="Uchiyama S."/>
            <person name="Vandenbol M."/>
            <person name="Vannier F."/>
            <person name="Vassarotti A."/>
            <person name="Viari A."/>
            <person name="Wambutt R."/>
            <person name="Wedler E."/>
            <person name="Wedler H."/>
            <person name="Weitzenegger T."/>
            <person name="Winters P."/>
            <person name="Wipat A."/>
            <person name="Yamamoto H."/>
            <person name="Yamane K."/>
            <person name="Yasumoto K."/>
            <person name="Yata K."/>
            <person name="Yoshida K."/>
            <person name="Yoshikawa H.-F."/>
            <person name="Zumstein E."/>
            <person name="Yoshikawa H."/>
            <person name="Danchin A."/>
        </authorList>
    </citation>
    <scope>NUCLEOTIDE SEQUENCE [LARGE SCALE GENOMIC DNA]</scope>
    <source>
        <strain>168</strain>
    </source>
</reference>
<comment type="cofactor">
    <cofactor evidence="2">
        <name>pyridoxal 5'-phosphate</name>
        <dbReference type="ChEBI" id="CHEBI:597326"/>
    </cofactor>
</comment>
<comment type="pathway">
    <text>Spore coat biogenesis; spore coat polysaccharide biosynthesis.</text>
</comment>
<comment type="similarity">
    <text evidence="2">Belongs to the DegT/DnrJ/EryC1 family.</text>
</comment>
<keyword id="KW-0663">Pyridoxal phosphate</keyword>
<keyword id="KW-1185">Reference proteome</keyword>